<sequence>MILSNLSYIDNKELETINIVEGVCVFSKNVGKDIMASFKNVVGGEIKSYSEMVRDVKDTAVKKMVEEAKNLGADAVINIRYAMTSMSQGSTLAVIVSGTAVKVKGE</sequence>
<keyword id="KW-1185">Reference proteome</keyword>
<protein>
    <recommendedName>
        <fullName evidence="1">UPF0145 protein CTC_01500</fullName>
    </recommendedName>
</protein>
<comment type="similarity">
    <text evidence="1">Belongs to the UPF0145 family.</text>
</comment>
<organism>
    <name type="scientific">Clostridium tetani (strain Massachusetts / E88)</name>
    <dbReference type="NCBI Taxonomy" id="212717"/>
    <lineage>
        <taxon>Bacteria</taxon>
        <taxon>Bacillati</taxon>
        <taxon>Bacillota</taxon>
        <taxon>Clostridia</taxon>
        <taxon>Eubacteriales</taxon>
        <taxon>Clostridiaceae</taxon>
        <taxon>Clostridium</taxon>
    </lineage>
</organism>
<gene>
    <name type="ordered locus">CTC_01500</name>
</gene>
<proteinExistence type="inferred from homology"/>
<feature type="chain" id="PRO_0000138464" description="UPF0145 protein CTC_01500">
    <location>
        <begin position="1"/>
        <end position="106"/>
    </location>
</feature>
<name>Y1500_CLOTE</name>
<reference key="1">
    <citation type="journal article" date="2003" name="Proc. Natl. Acad. Sci. U.S.A.">
        <title>The genome sequence of Clostridium tetani, the causative agent of tetanus disease.</title>
        <authorList>
            <person name="Brueggemann H."/>
            <person name="Baeumer S."/>
            <person name="Fricke W.F."/>
            <person name="Wiezer A."/>
            <person name="Liesegang H."/>
            <person name="Decker I."/>
            <person name="Herzberg C."/>
            <person name="Martinez-Arias R."/>
            <person name="Merkl R."/>
            <person name="Henne A."/>
            <person name="Gottschalk G."/>
        </authorList>
    </citation>
    <scope>NUCLEOTIDE SEQUENCE [LARGE SCALE GENOMIC DNA]</scope>
    <source>
        <strain>Massachusetts / E88</strain>
    </source>
</reference>
<evidence type="ECO:0000255" key="1">
    <source>
        <dbReference type="HAMAP-Rule" id="MF_00338"/>
    </source>
</evidence>
<dbReference type="EMBL" id="AE015927">
    <property type="protein sequence ID" value="AAO36056.1"/>
    <property type="molecule type" value="Genomic_DNA"/>
</dbReference>
<dbReference type="RefSeq" id="WP_011099716.1">
    <property type="nucleotide sequence ID" value="NC_004557.1"/>
</dbReference>
<dbReference type="SMR" id="Q894N6"/>
<dbReference type="GeneID" id="24254744"/>
<dbReference type="KEGG" id="ctc:CTC_01500"/>
<dbReference type="HOGENOM" id="CLU_117144_1_2_9"/>
<dbReference type="OrthoDB" id="9796448at2"/>
<dbReference type="Proteomes" id="UP000001412">
    <property type="component" value="Chromosome"/>
</dbReference>
<dbReference type="Gene3D" id="3.30.110.70">
    <property type="entry name" value="Hypothetical protein apc22750. Chain B"/>
    <property type="match status" value="1"/>
</dbReference>
<dbReference type="HAMAP" id="MF_00338">
    <property type="entry name" value="UPF0145"/>
    <property type="match status" value="1"/>
</dbReference>
<dbReference type="InterPro" id="IPR035439">
    <property type="entry name" value="UPF0145_dom_sf"/>
</dbReference>
<dbReference type="InterPro" id="IPR002765">
    <property type="entry name" value="UPF0145_YbjQ-like"/>
</dbReference>
<dbReference type="PANTHER" id="PTHR34068:SF2">
    <property type="entry name" value="UPF0145 PROTEIN SCO3412"/>
    <property type="match status" value="1"/>
</dbReference>
<dbReference type="PANTHER" id="PTHR34068">
    <property type="entry name" value="UPF0145 PROTEIN YBJQ"/>
    <property type="match status" value="1"/>
</dbReference>
<dbReference type="Pfam" id="PF01906">
    <property type="entry name" value="YbjQ_1"/>
    <property type="match status" value="1"/>
</dbReference>
<dbReference type="SUPFAM" id="SSF117782">
    <property type="entry name" value="YbjQ-like"/>
    <property type="match status" value="1"/>
</dbReference>
<accession>Q894N6</accession>